<name>MRAZ_NATTJ</name>
<organism>
    <name type="scientific">Natranaerobius thermophilus (strain ATCC BAA-1301 / DSM 18059 / JW/NM-WN-LF)</name>
    <dbReference type="NCBI Taxonomy" id="457570"/>
    <lineage>
        <taxon>Bacteria</taxon>
        <taxon>Bacillati</taxon>
        <taxon>Bacillota</taxon>
        <taxon>Clostridia</taxon>
        <taxon>Natranaerobiales</taxon>
        <taxon>Natranaerobiaceae</taxon>
        <taxon>Natranaerobius</taxon>
    </lineage>
</organism>
<keyword id="KW-0963">Cytoplasm</keyword>
<keyword id="KW-0238">DNA-binding</keyword>
<keyword id="KW-1185">Reference proteome</keyword>
<keyword id="KW-0677">Repeat</keyword>
<keyword id="KW-0804">Transcription</keyword>
<keyword id="KW-0805">Transcription regulation</keyword>
<evidence type="ECO:0000255" key="1">
    <source>
        <dbReference type="HAMAP-Rule" id="MF_01008"/>
    </source>
</evidence>
<evidence type="ECO:0000255" key="2">
    <source>
        <dbReference type="PROSITE-ProRule" id="PRU01076"/>
    </source>
</evidence>
<dbReference type="EMBL" id="CP001034">
    <property type="protein sequence ID" value="ACB84878.1"/>
    <property type="molecule type" value="Genomic_DNA"/>
</dbReference>
<dbReference type="RefSeq" id="WP_012447753.1">
    <property type="nucleotide sequence ID" value="NC_010718.1"/>
</dbReference>
<dbReference type="SMR" id="B2A2G3"/>
<dbReference type="FunCoup" id="B2A2G3">
    <property type="interactions" value="239"/>
</dbReference>
<dbReference type="STRING" id="457570.Nther_1295"/>
<dbReference type="KEGG" id="nth:Nther_1295"/>
<dbReference type="eggNOG" id="COG2001">
    <property type="taxonomic scope" value="Bacteria"/>
</dbReference>
<dbReference type="HOGENOM" id="CLU_107907_0_5_9"/>
<dbReference type="InParanoid" id="B2A2G3"/>
<dbReference type="OrthoDB" id="9807753at2"/>
<dbReference type="Proteomes" id="UP000001683">
    <property type="component" value="Chromosome"/>
</dbReference>
<dbReference type="GO" id="GO:0005737">
    <property type="term" value="C:cytoplasm"/>
    <property type="evidence" value="ECO:0007669"/>
    <property type="project" value="UniProtKB-UniRule"/>
</dbReference>
<dbReference type="GO" id="GO:0009295">
    <property type="term" value="C:nucleoid"/>
    <property type="evidence" value="ECO:0007669"/>
    <property type="project" value="UniProtKB-SubCell"/>
</dbReference>
<dbReference type="GO" id="GO:0003700">
    <property type="term" value="F:DNA-binding transcription factor activity"/>
    <property type="evidence" value="ECO:0007669"/>
    <property type="project" value="UniProtKB-UniRule"/>
</dbReference>
<dbReference type="GO" id="GO:0000976">
    <property type="term" value="F:transcription cis-regulatory region binding"/>
    <property type="evidence" value="ECO:0007669"/>
    <property type="project" value="TreeGrafter"/>
</dbReference>
<dbReference type="GO" id="GO:2000143">
    <property type="term" value="P:negative regulation of DNA-templated transcription initiation"/>
    <property type="evidence" value="ECO:0007669"/>
    <property type="project" value="TreeGrafter"/>
</dbReference>
<dbReference type="CDD" id="cd16321">
    <property type="entry name" value="MraZ_C"/>
    <property type="match status" value="1"/>
</dbReference>
<dbReference type="CDD" id="cd16320">
    <property type="entry name" value="MraZ_N"/>
    <property type="match status" value="1"/>
</dbReference>
<dbReference type="FunFam" id="3.40.1550.20:FF:000002">
    <property type="entry name" value="Transcriptional regulator MraZ"/>
    <property type="match status" value="1"/>
</dbReference>
<dbReference type="Gene3D" id="3.40.1550.20">
    <property type="entry name" value="Transcriptional regulator MraZ domain"/>
    <property type="match status" value="1"/>
</dbReference>
<dbReference type="HAMAP" id="MF_01008">
    <property type="entry name" value="MraZ"/>
    <property type="match status" value="1"/>
</dbReference>
<dbReference type="InterPro" id="IPR003444">
    <property type="entry name" value="MraZ"/>
</dbReference>
<dbReference type="InterPro" id="IPR035644">
    <property type="entry name" value="MraZ_C"/>
</dbReference>
<dbReference type="InterPro" id="IPR020603">
    <property type="entry name" value="MraZ_dom"/>
</dbReference>
<dbReference type="InterPro" id="IPR035642">
    <property type="entry name" value="MraZ_N"/>
</dbReference>
<dbReference type="InterPro" id="IPR038619">
    <property type="entry name" value="MraZ_sf"/>
</dbReference>
<dbReference type="InterPro" id="IPR007159">
    <property type="entry name" value="SpoVT-AbrB_dom"/>
</dbReference>
<dbReference type="InterPro" id="IPR037914">
    <property type="entry name" value="SpoVT-AbrB_sf"/>
</dbReference>
<dbReference type="NCBIfam" id="TIGR00242">
    <property type="entry name" value="division/cell wall cluster transcriptional repressor MraZ"/>
    <property type="match status" value="1"/>
</dbReference>
<dbReference type="PANTHER" id="PTHR34701">
    <property type="entry name" value="TRANSCRIPTIONAL REGULATOR MRAZ"/>
    <property type="match status" value="1"/>
</dbReference>
<dbReference type="PANTHER" id="PTHR34701:SF1">
    <property type="entry name" value="TRANSCRIPTIONAL REGULATOR MRAZ"/>
    <property type="match status" value="1"/>
</dbReference>
<dbReference type="Pfam" id="PF02381">
    <property type="entry name" value="MraZ"/>
    <property type="match status" value="2"/>
</dbReference>
<dbReference type="SUPFAM" id="SSF89447">
    <property type="entry name" value="AbrB/MazE/MraZ-like"/>
    <property type="match status" value="1"/>
</dbReference>
<dbReference type="PROSITE" id="PS51740">
    <property type="entry name" value="SPOVT_ABRB"/>
    <property type="match status" value="2"/>
</dbReference>
<reference key="1">
    <citation type="submission" date="2008-04" db="EMBL/GenBank/DDBJ databases">
        <title>Complete sequence of chromosome of Natranaerobius thermophilus JW/NM-WN-LF.</title>
        <authorList>
            <consortium name="US DOE Joint Genome Institute"/>
            <person name="Copeland A."/>
            <person name="Lucas S."/>
            <person name="Lapidus A."/>
            <person name="Glavina del Rio T."/>
            <person name="Dalin E."/>
            <person name="Tice H."/>
            <person name="Bruce D."/>
            <person name="Goodwin L."/>
            <person name="Pitluck S."/>
            <person name="Chertkov O."/>
            <person name="Brettin T."/>
            <person name="Detter J.C."/>
            <person name="Han C."/>
            <person name="Kuske C.R."/>
            <person name="Schmutz J."/>
            <person name="Larimer F."/>
            <person name="Land M."/>
            <person name="Hauser L."/>
            <person name="Kyrpides N."/>
            <person name="Lykidis A."/>
            <person name="Mesbah N.M."/>
            <person name="Wiegel J."/>
        </authorList>
    </citation>
    <scope>NUCLEOTIDE SEQUENCE [LARGE SCALE GENOMIC DNA]</scope>
    <source>
        <strain>ATCC BAA-1301 / DSM 18059 / JW/NM-WN-LF</strain>
    </source>
</reference>
<protein>
    <recommendedName>
        <fullName>Transcriptional regulator MraZ</fullName>
    </recommendedName>
</protein>
<proteinExistence type="inferred from homology"/>
<comment type="subunit">
    <text evidence="1">Forms oligomers.</text>
</comment>
<comment type="subcellular location">
    <subcellularLocation>
        <location evidence="1">Cytoplasm</location>
        <location evidence="1">Nucleoid</location>
    </subcellularLocation>
</comment>
<comment type="similarity">
    <text evidence="1">Belongs to the MraZ family.</text>
</comment>
<gene>
    <name evidence="1" type="primary">mraZ</name>
    <name type="ordered locus">Nther_1295</name>
</gene>
<feature type="chain" id="PRO_1000134812" description="Transcriptional regulator MraZ">
    <location>
        <begin position="1"/>
        <end position="143"/>
    </location>
</feature>
<feature type="domain" description="SpoVT-AbrB 1" evidence="2">
    <location>
        <begin position="5"/>
        <end position="47"/>
    </location>
</feature>
<feature type="domain" description="SpoVT-AbrB 2" evidence="2">
    <location>
        <begin position="76"/>
        <end position="119"/>
    </location>
</feature>
<accession>B2A2G3</accession>
<sequence length="143" mass="16486">MFMGEFRHSLDSKGRVIVPAKFRKGLGDNFVATRGLDNCIFVYPMNEWKVLEEKIRQLPLTKSDARAFSRFFLSGASECELDKQGRISLPSNLRDYAALQKDVVIIGVSNRVEIWSQEKWDNYQQQAESSFENIAEEIVDFDI</sequence>